<keyword id="KW-0378">Hydrolase</keyword>
<keyword id="KW-0547">Nucleotide-binding</keyword>
<keyword id="KW-0548">Nucleotidyltransferase</keyword>
<keyword id="KW-1185">Reference proteome</keyword>
<keyword id="KW-0688">Ribosomal frameshifting</keyword>
<keyword id="KW-0694">RNA-binding</keyword>
<keyword id="KW-0696">RNA-directed RNA polymerase</keyword>
<keyword id="KW-0808">Transferase</keyword>
<keyword id="KW-0693">Viral RNA replication</keyword>
<accession>P23172</accession>
<accession>Q87027</accession>
<sequence length="1512" mass="171449">MSSLLNSLLPEYFKPKTNLNINSSRVQYGFNARIDMQYEDDSGTRKGSRPNAFMSNTVAFIGNYEGIIVDDIPILDGLRADIFDTHGDLDMGLVEDALSKSTMIRRNVPTYTAYASELLYKRNLTSLFYNMLRLYYIKKWGSIKYEKDAIFYDNGHACLLNRQLFPKSRDASLESSLSLPEAEIAMLDPGLEFPEEDVPAILWHGRVSSRATCILGQACSEFAPLAPFSIAHYSPQLTRKLFVNAPAGIEPSSGRYTHEDVKDAITILVSANQAYTDFEAAYLMLAQTLVSPVPRTAEASAWFINAGMVNMPTLSCANGYYPALTNVNPYHRLDTWKDTLNHWVAYPDMLFYHSVAMIESCYVELGNVARVSDSDAINKYTFTELSVQGRPVMNRGIIVDLTLVAMRTGREISLPYPVSCGLTRTDALLQGTEIHVPVVVKDIDMPQYYNAIDKDVIEGQETVIKVKQLPPAMYPIYTYGINTTEFYSDHFEDQVQVEMAPIDNGKAVFNDARKFSKFMSIMRMMGNDVTATDLVTGRKVSNWADNSSGRFLYTDVKYEGQTAFLVDMDTVKARDHCWVSIVDPNGTMNLSYKMTNFRAAMFSRNKPLYMTGGSVRTIATGNYRDAAERLRAMDETLRLKPFKITEKLDFSCSSLRDTKFVGQQYAILTPSGTTTDIRSGRGTNQSYRRGRTSTGYRIGVEDDEDLDIGTVKYIVPLYLNGDNVAQNCLEATHVLIKACSIANRIVDDGEGHCFTQQGLAQQWIFHRGEMIFVKAVRIGQLNAYYVDYKNVTNYSLKTAAQVGATISNNLRHGFVDNQQDAYTRLVANYSDTRKWIRDNFTYNYNMEKEKYRITQYHHTHVRLKDLFPSRKIVKLEGYEALLAMMLDRFNNIESTHVTFFTYLRALPDREKEVFISLVLNYNGLGREWLKSEGVRAKQAQGTVKYDMSKLFELNVLENGVDEEVDWEKEKRNRSDIKTVNISYAKVLEHCRELFIMARAEGKRPMRMKWQEYWRQRAVIMPGGSVHSQHPVEQDVIRVLPREIRSKKGVASVMPYKEQKYFTSRRPEIHAYTSTKYEWGKVRALYGCDFSSHTMADFGLLQCEDTFPGFVPTGSYANEDYVRTRIAGTHSLIPFCYDFDDFNSQHSKEAMQAVIDAWISVYHDKLTDDQIEAAKWTRNSVDRMVAHQPNTGETYDVKGTLFSGWRLTTFFNTALNYCYLANAGINSLVPTSLHNGDDVFAGIRTIADGISLIKNAAATGVRANTTKMNIGTIAEFLRVDMRAKNSTGSQYLTRGIATFTHSRVESDAPLTLRNLVSAYKTRYDEILARGASIDNMKPLYRKQLFFARKLFNVEKDIVDNLITMDISCGGLQEKGRVSEMVLQEVDIENIDSYRKTRMIAKLIDKGVGDYTAFLKTNFSEIADAITRETRVESVTKAYNVKKKTVVRAFRDLSAAYHERAVRHAWKGMSGLHIVNRIRMGVSNLVMVVSKINPAKANVLAKSGDPTKWLAVLT</sequence>
<organism>
    <name type="scientific">Saccharomyces cerevisiae virus L-BC</name>
    <name type="common">ScV-L-BC</name>
    <name type="synonym">ScVLa</name>
    <dbReference type="NCBI Taxonomy" id="42478"/>
    <lineage>
        <taxon>Viruses</taxon>
        <taxon>Riboviria</taxon>
        <taxon>Orthornavirae</taxon>
        <taxon>Duplornaviricota</taxon>
        <taxon>Chrymotiviricetes</taxon>
        <taxon>Ghabrivirales</taxon>
        <taxon>Totiviridae</taxon>
        <taxon>Totivirus</taxon>
        <taxon>Saccharomyces cerevisiae virus LBCLa</taxon>
    </lineage>
</organism>
<evidence type="ECO:0000250" key="1"/>
<evidence type="ECO:0000305" key="2"/>
<reference key="1">
    <citation type="journal article" date="1991" name="Nucleic Acids Res.">
        <title>Relationships among the positive strand and double-strand RNA viruses as viewed through their RNA-dependent RNA polymerases.</title>
        <authorList>
            <person name="Bruenn J.A."/>
        </authorList>
    </citation>
    <scope>NUCLEOTIDE SEQUENCE [MRNA] OF 622-863</scope>
    <source>
        <strain>LO14</strain>
    </source>
</reference>
<reference key="2">
    <citation type="journal article" date="1996" name="Virology">
        <title>A second double-stranded RNA virus from yeast.</title>
        <authorList>
            <person name="Park C.M."/>
            <person name="Lopinski J.D."/>
            <person name="Masuda J."/>
            <person name="Tzeng T.H."/>
            <person name="Bruenn J.A."/>
        </authorList>
    </citation>
    <scope>NUCLEOTIDE SEQUENCE [GENOMIC RNA]</scope>
</reference>
<proteinExistence type="evidence at transcript level"/>
<gene>
    <name type="primary">gag-pol</name>
</gene>
<protein>
    <recommendedName>
        <fullName>Probable RNA-directed RNA polymerase</fullName>
        <ecNumber>2.7.7.48</ecNumber>
    </recommendedName>
    <alternativeName>
        <fullName>Gag-Pol protein</fullName>
    </alternativeName>
</protein>
<comment type="function">
    <text evidence="1">RNA-dependent RNA polymerase which replicates the viral genome. Catalyzes the transcription of fully conservative plus-strand genomic RNAs that are extruded from the virion into the cytoplasm where they function as mRNAs for translation of viral proteins and also as substrates for encapsidation to form new virions. Once encapsidated, the positive strand is converted to dsRNA by the RNA-directed RNA polymerase (By similarity).</text>
</comment>
<comment type="catalytic activity">
    <reaction>
        <text>RNA(n) + a ribonucleoside 5'-triphosphate = RNA(n+1) + diphosphate</text>
        <dbReference type="Rhea" id="RHEA:21248"/>
        <dbReference type="Rhea" id="RHEA-COMP:14527"/>
        <dbReference type="Rhea" id="RHEA-COMP:17342"/>
        <dbReference type="ChEBI" id="CHEBI:33019"/>
        <dbReference type="ChEBI" id="CHEBI:61557"/>
        <dbReference type="ChEBI" id="CHEBI:140395"/>
        <dbReference type="EC" id="2.7.7.48"/>
    </reaction>
</comment>
<comment type="alternative products">
    <event type="ribosomal frameshifting"/>
    <isoform>
        <id>P23172-1</id>
        <name>RNA-directed RNA polymerase</name>
        <name>Pol protein</name>
        <sequence type="displayed"/>
    </isoform>
    <isoform>
        <id>Q87026-1</id>
        <name>Major capsid protein</name>
        <name>Gag protein</name>
        <sequence type="external"/>
    </isoform>
</comment>
<comment type="miscellaneous">
    <text evidence="1">One molecule or two of Gag capsid protein is replaced in the virion by Gag-Pol because the fusion protein is essential for RNA encapsidation and replication.</text>
</comment>
<comment type="miscellaneous">
    <molecule>Isoform RNA-directed RNA polymerase</molecule>
    <text>Produced by -1 ribosomal frameshifting.</text>
</comment>
<comment type="similarity">
    <text evidence="2">Belongs to the totiviridae RNA-directed RNA polymerase family.</text>
</comment>
<comment type="sequence caution" evidence="2">
    <conflict type="erroneous gene model prediction">
        <sequence resource="EMBL-CDS" id="AAB02146"/>
    </conflict>
</comment>
<organismHost>
    <name type="scientific">Saccharomyces cerevisiae</name>
    <name type="common">Baker's yeast</name>
    <dbReference type="NCBI Taxonomy" id="4932"/>
</organismHost>
<dbReference type="EC" id="2.7.7.48"/>
<dbReference type="EMBL" id="X54405">
    <property type="protein sequence ID" value="CAA38271.1"/>
    <property type="molecule type" value="mRNA"/>
</dbReference>
<dbReference type="EMBL" id="U01060">
    <property type="protein sequence ID" value="AAB02146.1"/>
    <property type="status" value="ALT_SEQ"/>
    <property type="molecule type" value="Genomic_RNA"/>
</dbReference>
<dbReference type="PIR" id="S72354">
    <property type="entry name" value="S72354"/>
</dbReference>
<dbReference type="SMR" id="P23172"/>
<dbReference type="KEGG" id="vg:1403712"/>
<dbReference type="OrthoDB" id="9167at10239"/>
<dbReference type="Proteomes" id="UP000207604">
    <property type="component" value="Genome"/>
</dbReference>
<dbReference type="GO" id="GO:0016787">
    <property type="term" value="F:hydrolase activity"/>
    <property type="evidence" value="ECO:0007669"/>
    <property type="project" value="UniProtKB-KW"/>
</dbReference>
<dbReference type="GO" id="GO:0000166">
    <property type="term" value="F:nucleotide binding"/>
    <property type="evidence" value="ECO:0007669"/>
    <property type="project" value="UniProtKB-KW"/>
</dbReference>
<dbReference type="GO" id="GO:0003723">
    <property type="term" value="F:RNA binding"/>
    <property type="evidence" value="ECO:0007669"/>
    <property type="project" value="UniProtKB-KW"/>
</dbReference>
<dbReference type="GO" id="GO:0003968">
    <property type="term" value="F:RNA-directed RNA polymerase activity"/>
    <property type="evidence" value="ECO:0007669"/>
    <property type="project" value="UniProtKB-KW"/>
</dbReference>
<dbReference type="GO" id="GO:0006351">
    <property type="term" value="P:DNA-templated transcription"/>
    <property type="evidence" value="ECO:0007669"/>
    <property type="project" value="InterPro"/>
</dbReference>
<dbReference type="GO" id="GO:0075523">
    <property type="term" value="P:viral translational frameshifting"/>
    <property type="evidence" value="ECO:0007669"/>
    <property type="project" value="UniProtKB-KW"/>
</dbReference>
<dbReference type="Gene3D" id="3.90.1840.10">
    <property type="entry name" value="Major capsid protein"/>
    <property type="match status" value="1"/>
</dbReference>
<dbReference type="InterPro" id="IPR043502">
    <property type="entry name" value="DNA/RNA_pol_sf"/>
</dbReference>
<dbReference type="InterPro" id="IPR015302">
    <property type="entry name" value="Major_coat_LA-virus"/>
</dbReference>
<dbReference type="InterPro" id="IPR036332">
    <property type="entry name" value="Major_coat_LA-virus_sf"/>
</dbReference>
<dbReference type="InterPro" id="IPR001795">
    <property type="entry name" value="RNA-dir_pol_luteovirus"/>
</dbReference>
<dbReference type="Pfam" id="PF09220">
    <property type="entry name" value="LA-virus_coat"/>
    <property type="match status" value="1"/>
</dbReference>
<dbReference type="Pfam" id="PF02123">
    <property type="entry name" value="RdRP_4"/>
    <property type="match status" value="1"/>
</dbReference>
<dbReference type="SUPFAM" id="SSF56672">
    <property type="entry name" value="DNA/RNA polymerases"/>
    <property type="match status" value="1"/>
</dbReference>
<dbReference type="SUPFAM" id="SSF82856">
    <property type="entry name" value="L-A virus major coat protein"/>
    <property type="match status" value="1"/>
</dbReference>
<name>RDRP_SCVLB</name>
<feature type="chain" id="PRO_0000222992" description="Probable RNA-directed RNA polymerase">
    <location>
        <begin position="1"/>
        <end position="1512"/>
    </location>
</feature>